<organism>
    <name type="scientific">Geobacillus stearothermophilus</name>
    <name type="common">Bacillus stearothermophilus</name>
    <dbReference type="NCBI Taxonomy" id="1422"/>
    <lineage>
        <taxon>Bacteria</taxon>
        <taxon>Bacillati</taxon>
        <taxon>Bacillota</taxon>
        <taxon>Bacilli</taxon>
        <taxon>Bacillales</taxon>
        <taxon>Anoxybacillaceae</taxon>
        <taxon>Geobacillus</taxon>
    </lineage>
</organism>
<keyword id="KW-0002">3D-structure</keyword>
<keyword id="KW-0067">ATP-binding</keyword>
<keyword id="KW-0903">Direct protein sequencing</keyword>
<keyword id="KW-0235">DNA replication</keyword>
<keyword id="KW-0238">DNA-binding</keyword>
<keyword id="KW-0347">Helicase</keyword>
<keyword id="KW-0378">Hydrolase</keyword>
<keyword id="KW-0413">Isomerase</keyword>
<keyword id="KW-0547">Nucleotide-binding</keyword>
<keyword id="KW-0639">Primosome</keyword>
<accession>Q9X4C9</accession>
<feature type="chain" id="PRO_0000460599" description="Replicative DNA helicase DnaB">
    <location>
        <begin position="1"/>
        <end position="454"/>
    </location>
</feature>
<feature type="domain" description="SF4 helicase" evidence="1">
    <location>
        <begin position="179"/>
        <end position="445"/>
    </location>
</feature>
<feature type="region of interest" description="N-terminal domain (NTD)" evidence="16 17">
    <location>
        <begin position="1"/>
        <end position="149"/>
    </location>
</feature>
<feature type="region of interest" description="Linker helix" evidence="16 17">
    <location>
        <begin position="163"/>
        <end position="176"/>
    </location>
</feature>
<feature type="region of interest" description="C-terminal domain (CTD)" evidence="16 17">
    <location>
        <begin position="183"/>
        <end position="454"/>
    </location>
</feature>
<feature type="active site" description="Nucleophile" evidence="15 17">
    <location>
        <position position="241"/>
    </location>
</feature>
<feature type="binding site" evidence="17 23">
    <location>
        <position position="213"/>
    </location>
    <ligand>
        <name>ATP</name>
        <dbReference type="ChEBI" id="CHEBI:30616"/>
    </ligand>
</feature>
<feature type="binding site" evidence="17 23">
    <location>
        <position position="215"/>
    </location>
    <ligand>
        <name>ATP</name>
        <dbReference type="ChEBI" id="CHEBI:30616"/>
    </ligand>
</feature>
<feature type="binding site" evidence="17 23">
    <location>
        <position position="216"/>
    </location>
    <ligand>
        <name>ATP</name>
        <dbReference type="ChEBI" id="CHEBI:30616"/>
    </ligand>
</feature>
<feature type="binding site" evidence="17 23">
    <location>
        <position position="217"/>
    </location>
    <ligand>
        <name>ATP</name>
        <dbReference type="ChEBI" id="CHEBI:30616"/>
    </ligand>
</feature>
<feature type="binding site" evidence="17 23">
    <location>
        <position position="218"/>
    </location>
    <ligand>
        <name>ATP</name>
        <dbReference type="ChEBI" id="CHEBI:30616"/>
    </ligand>
</feature>
<feature type="binding site" evidence="17 23">
    <location>
        <position position="250"/>
    </location>
    <ligand>
        <name>ATP</name>
        <dbReference type="ChEBI" id="CHEBI:30616"/>
    </ligand>
</feature>
<feature type="binding site" evidence="17">
    <location>
        <position position="362"/>
    </location>
    <ligand>
        <name>ATP</name>
        <dbReference type="ChEBI" id="CHEBI:30616"/>
    </ligand>
</feature>
<feature type="binding site" evidence="8 23">
    <location>
        <position position="381"/>
    </location>
    <ligand>
        <name>ssDNA</name>
        <dbReference type="ChEBI" id="CHEBI:9160"/>
    </ligand>
</feature>
<feature type="binding site" evidence="8 23">
    <location>
        <position position="382"/>
    </location>
    <ligand>
        <name>ssDNA</name>
        <dbReference type="ChEBI" id="CHEBI:9160"/>
    </ligand>
</feature>
<feature type="binding site" evidence="8 23">
    <location>
        <position position="384"/>
    </location>
    <ligand>
        <name>ssDNA</name>
        <dbReference type="ChEBI" id="CHEBI:9160"/>
    </ligand>
</feature>
<feature type="binding site" evidence="17 23">
    <location>
        <position position="418"/>
    </location>
    <ligand>
        <name>ATP</name>
        <dbReference type="ChEBI" id="CHEBI:30616"/>
    </ligand>
</feature>
<feature type="binding site" evidence="17 23">
    <location>
        <position position="419"/>
    </location>
    <ligand>
        <name>ATP</name>
        <dbReference type="ChEBI" id="CHEBI:30616"/>
    </ligand>
</feature>
<feature type="binding site" evidence="17 23">
    <location>
        <position position="420"/>
    </location>
    <ligand>
        <name>ATP</name>
        <dbReference type="ChEBI" id="CHEBI:30616"/>
    </ligand>
</feature>
<feature type="site" description="Gamma-phosphate sensor" evidence="15">
    <location>
        <position position="362"/>
    </location>
</feature>
<feature type="mutagenesis site" description="Loss of helicase activity, reduced ATPase activity, still forms homohexamers, ATPase not activated by DnaG primase, still interacts with DnaG, almost complete loss of ssDNA-binding." evidence="3">
    <original>K</original>
    <variation>A</variation>
    <location>
        <position position="216"/>
    </location>
</feature>
<feature type="mutagenesis site" description="Loss of helicase and ATPase activity, still interacts with DnaG, complete loss of ssDNA-binding. No longer forms a complex with DNA clamp loader subunit tau." evidence="3 9">
    <original>T</original>
    <variation>A</variation>
    <location>
        <position position="217"/>
    </location>
</feature>
<feature type="mutagenesis site" description="Loss of helicase activity, reduced ATPase activity, ATPase partially activated by DnaG primase, 4-fold decreased ssDNA-binding." evidence="3">
    <original>E</original>
    <variation>A</variation>
    <location>
        <position position="241"/>
    </location>
</feature>
<feature type="mutagenesis site" description="Loss of helicase and ATPase activity, still interacts with DnaG, 4- to 15-fold decreased ssDNA-binding." evidence="3">
    <original>D</original>
    <variation>A</variation>
    <variation>N</variation>
    <location>
        <position position="320"/>
    </location>
</feature>
<feature type="mutagenesis site" description="Partial loss of helicase and ATPase activities, ATPase and helicase partially activated by DnaG primase, wild-type ss- and dsDNA binding." evidence="3">
    <original>Q</original>
    <variation>A</variation>
    <location>
        <position position="362"/>
    </location>
</feature>
<feature type="mutagenesis site" description="Partial loss of helicase and ATPase activities, still forms homohexamers, ATPase and helicase not activated by DnaG primase, still interacts with DnaG, binds ss- and dsDNA in absence of nucleotide and less well in presence of nucleotide." evidence="3">
    <original>Q</original>
    <variation>K</variation>
    <location>
        <position position="362"/>
    </location>
</feature>
<feature type="helix" evidence="25">
    <location>
        <begin position="14"/>
        <end position="26"/>
    </location>
</feature>
<feature type="helix" evidence="25">
    <location>
        <begin position="28"/>
        <end position="30"/>
    </location>
</feature>
<feature type="helix" evidence="25">
    <location>
        <begin position="31"/>
        <end position="37"/>
    </location>
</feature>
<feature type="helix" evidence="25">
    <location>
        <begin position="40"/>
        <end position="42"/>
    </location>
</feature>
<feature type="helix" evidence="25">
    <location>
        <begin position="46"/>
        <end position="60"/>
    </location>
</feature>
<feature type="helix" evidence="25">
    <location>
        <begin position="67"/>
        <end position="76"/>
    </location>
</feature>
<feature type="turn" evidence="25">
    <location>
        <begin position="80"/>
        <end position="84"/>
    </location>
</feature>
<feature type="helix" evidence="25">
    <location>
        <begin position="85"/>
        <end position="93"/>
    </location>
</feature>
<feature type="helix" evidence="25">
    <location>
        <begin position="99"/>
        <end position="101"/>
    </location>
</feature>
<feature type="helix" evidence="25">
    <location>
        <begin position="102"/>
        <end position="130"/>
    </location>
</feature>
<feature type="helix" evidence="25">
    <location>
        <begin position="137"/>
        <end position="151"/>
    </location>
</feature>
<feature type="helix" evidence="25">
    <location>
        <begin position="162"/>
        <end position="177"/>
    </location>
</feature>
<feature type="helix" evidence="25">
    <location>
        <begin position="191"/>
        <end position="197"/>
    </location>
</feature>
<feature type="strand" evidence="25">
    <location>
        <begin position="198"/>
        <end position="200"/>
    </location>
</feature>
<feature type="strand" evidence="25">
    <location>
        <begin position="205"/>
        <end position="209"/>
    </location>
</feature>
<feature type="helix" evidence="25">
    <location>
        <begin position="216"/>
        <end position="230"/>
    </location>
</feature>
<feature type="strand" evidence="25">
    <location>
        <begin position="235"/>
        <end position="242"/>
    </location>
</feature>
<feature type="helix" evidence="25">
    <location>
        <begin position="244"/>
        <end position="256"/>
    </location>
</feature>
<feature type="helix" evidence="25">
    <location>
        <begin position="260"/>
        <end position="264"/>
    </location>
</feature>
<feature type="helix" evidence="25">
    <location>
        <begin position="270"/>
        <end position="284"/>
    </location>
</feature>
<feature type="strand" evidence="25">
    <location>
        <begin position="288"/>
        <end position="291"/>
    </location>
</feature>
<feature type="helix" evidence="25">
    <location>
        <begin position="298"/>
        <end position="309"/>
    </location>
</feature>
<feature type="turn" evidence="25">
    <location>
        <begin position="310"/>
        <end position="312"/>
    </location>
</feature>
<feature type="strand" evidence="25">
    <location>
        <begin position="316"/>
        <end position="320"/>
    </location>
</feature>
<feature type="helix" evidence="25">
    <location>
        <begin position="322"/>
        <end position="324"/>
    </location>
</feature>
<feature type="helix" evidence="25">
    <location>
        <begin position="336"/>
        <end position="353"/>
    </location>
</feature>
<feature type="strand" evidence="25">
    <location>
        <begin position="357"/>
        <end position="361"/>
    </location>
</feature>
<feature type="helix" evidence="26">
    <location>
        <begin position="365"/>
        <end position="368"/>
    </location>
</feature>
<feature type="strand" evidence="26">
    <location>
        <begin position="370"/>
        <end position="372"/>
    </location>
</feature>
<feature type="helix" evidence="25">
    <location>
        <begin position="378"/>
        <end position="381"/>
    </location>
</feature>
<feature type="helix" evidence="25">
    <location>
        <begin position="386"/>
        <end position="389"/>
    </location>
</feature>
<feature type="strand" evidence="25">
    <location>
        <begin position="391"/>
        <end position="398"/>
    </location>
</feature>
<feature type="helix" evidence="26">
    <location>
        <begin position="399"/>
        <end position="402"/>
    </location>
</feature>
<feature type="strand" evidence="25">
    <location>
        <begin position="411"/>
        <end position="422"/>
    </location>
</feature>
<feature type="strand" evidence="25">
    <location>
        <begin position="425"/>
        <end position="432"/>
    </location>
</feature>
<feature type="turn" evidence="25">
    <location>
        <begin position="433"/>
        <end position="436"/>
    </location>
</feature>
<feature type="strand" evidence="25">
    <location>
        <begin position="437"/>
        <end position="439"/>
    </location>
</feature>
<gene>
    <name evidence="11 18" type="primary">dnaB</name>
</gene>
<dbReference type="EC" id="5.6.2.3" evidence="14 15"/>
<dbReference type="EMBL" id="AF106032">
    <property type="protein sequence ID" value="AAD20314.1"/>
    <property type="molecule type" value="Genomic_DNA"/>
</dbReference>
<dbReference type="PDB" id="2R6A">
    <property type="method" value="X-ray"/>
    <property type="resolution" value="2.90 A"/>
    <property type="chains" value="A/B=1-454"/>
</dbReference>
<dbReference type="PDB" id="2R6C">
    <property type="method" value="X-ray"/>
    <property type="resolution" value="4.00 A"/>
    <property type="chains" value="A/B/C/D/E/F=1-454"/>
</dbReference>
<dbReference type="PDB" id="2R6D">
    <property type="method" value="X-ray"/>
    <property type="resolution" value="3.70 A"/>
    <property type="chains" value="A/B/C/D/E/F=1-454"/>
</dbReference>
<dbReference type="PDB" id="2R6E">
    <property type="method" value="X-ray"/>
    <property type="resolution" value="5.02 A"/>
    <property type="chains" value="A/B=1-454"/>
</dbReference>
<dbReference type="PDB" id="4ESV">
    <property type="method" value="X-ray"/>
    <property type="resolution" value="3.20 A"/>
    <property type="chains" value="A/B/C/D/E/F/G/H/I/J/K/L=1-454"/>
</dbReference>
<dbReference type="PDB" id="4M4W">
    <property type="method" value="X-ray"/>
    <property type="resolution" value="6.10 A"/>
    <property type="chains" value="A/B/C/D/E/F=1-454"/>
</dbReference>
<dbReference type="PDBsum" id="2R6A"/>
<dbReference type="PDBsum" id="2R6C"/>
<dbReference type="PDBsum" id="2R6D"/>
<dbReference type="PDBsum" id="2R6E"/>
<dbReference type="PDBsum" id="4ESV"/>
<dbReference type="PDBsum" id="4M4W"/>
<dbReference type="SMR" id="Q9X4C9"/>
<dbReference type="DIP" id="DIP-48437N"/>
<dbReference type="IntAct" id="Q9X4C9">
    <property type="interactions" value="3"/>
</dbReference>
<dbReference type="EvolutionaryTrace" id="Q9X4C9"/>
<dbReference type="GO" id="GO:0005829">
    <property type="term" value="C:cytosol"/>
    <property type="evidence" value="ECO:0007669"/>
    <property type="project" value="TreeGrafter"/>
</dbReference>
<dbReference type="GO" id="GO:1990077">
    <property type="term" value="C:primosome complex"/>
    <property type="evidence" value="ECO:0007669"/>
    <property type="project" value="UniProtKB-KW"/>
</dbReference>
<dbReference type="GO" id="GO:0005524">
    <property type="term" value="F:ATP binding"/>
    <property type="evidence" value="ECO:0007669"/>
    <property type="project" value="UniProtKB-KW"/>
</dbReference>
<dbReference type="GO" id="GO:0016887">
    <property type="term" value="F:ATP hydrolysis activity"/>
    <property type="evidence" value="ECO:0007669"/>
    <property type="project" value="RHEA"/>
</dbReference>
<dbReference type="GO" id="GO:0003677">
    <property type="term" value="F:DNA binding"/>
    <property type="evidence" value="ECO:0007669"/>
    <property type="project" value="UniProtKB-KW"/>
</dbReference>
<dbReference type="GO" id="GO:0003678">
    <property type="term" value="F:DNA helicase activity"/>
    <property type="evidence" value="ECO:0007669"/>
    <property type="project" value="InterPro"/>
</dbReference>
<dbReference type="GO" id="GO:0042802">
    <property type="term" value="F:identical protein binding"/>
    <property type="evidence" value="ECO:0000353"/>
    <property type="project" value="IntAct"/>
</dbReference>
<dbReference type="GO" id="GO:0006269">
    <property type="term" value="P:DNA replication, synthesis of primer"/>
    <property type="evidence" value="ECO:0007669"/>
    <property type="project" value="UniProtKB-KW"/>
</dbReference>
<dbReference type="CDD" id="cd00984">
    <property type="entry name" value="DnaB_C"/>
    <property type="match status" value="1"/>
</dbReference>
<dbReference type="FunFam" id="1.10.860.10:FF:000001">
    <property type="entry name" value="Replicative DNA helicase"/>
    <property type="match status" value="1"/>
</dbReference>
<dbReference type="FunFam" id="3.40.50.300:FF:000076">
    <property type="entry name" value="Replicative DNA helicase"/>
    <property type="match status" value="1"/>
</dbReference>
<dbReference type="Gene3D" id="1.10.860.10">
    <property type="entry name" value="DNAb Helicase, Chain A"/>
    <property type="match status" value="1"/>
</dbReference>
<dbReference type="Gene3D" id="3.40.50.300">
    <property type="entry name" value="P-loop containing nucleotide triphosphate hydrolases"/>
    <property type="match status" value="1"/>
</dbReference>
<dbReference type="InterPro" id="IPR036185">
    <property type="entry name" value="DNA_heli_DnaB-like_N_sf"/>
</dbReference>
<dbReference type="InterPro" id="IPR007692">
    <property type="entry name" value="DNA_helicase_DnaB"/>
</dbReference>
<dbReference type="InterPro" id="IPR007694">
    <property type="entry name" value="DNA_helicase_DnaB-like_C"/>
</dbReference>
<dbReference type="InterPro" id="IPR007693">
    <property type="entry name" value="DNA_helicase_DnaB-like_N"/>
</dbReference>
<dbReference type="InterPro" id="IPR016136">
    <property type="entry name" value="DNA_helicase_N/primase_C"/>
</dbReference>
<dbReference type="InterPro" id="IPR027417">
    <property type="entry name" value="P-loop_NTPase"/>
</dbReference>
<dbReference type="NCBIfam" id="TIGR00665">
    <property type="entry name" value="DnaB"/>
    <property type="match status" value="1"/>
</dbReference>
<dbReference type="NCBIfam" id="NF004384">
    <property type="entry name" value="PRK05748.1"/>
    <property type="match status" value="1"/>
</dbReference>
<dbReference type="PANTHER" id="PTHR30153:SF2">
    <property type="entry name" value="REPLICATIVE DNA HELICASE"/>
    <property type="match status" value="1"/>
</dbReference>
<dbReference type="PANTHER" id="PTHR30153">
    <property type="entry name" value="REPLICATIVE DNA HELICASE DNAB"/>
    <property type="match status" value="1"/>
</dbReference>
<dbReference type="Pfam" id="PF00772">
    <property type="entry name" value="DnaB"/>
    <property type="match status" value="1"/>
</dbReference>
<dbReference type="Pfam" id="PF03796">
    <property type="entry name" value="DnaB_C"/>
    <property type="match status" value="1"/>
</dbReference>
<dbReference type="SUPFAM" id="SSF48024">
    <property type="entry name" value="N-terminal domain of DnaB helicase"/>
    <property type="match status" value="1"/>
</dbReference>
<dbReference type="SUPFAM" id="SSF52540">
    <property type="entry name" value="P-loop containing nucleoside triphosphate hydrolases"/>
    <property type="match status" value="1"/>
</dbReference>
<dbReference type="PROSITE" id="PS00039">
    <property type="entry name" value="DEAD_ATP_HELICASE"/>
    <property type="match status" value="1"/>
</dbReference>
<dbReference type="PROSITE" id="PS51199">
    <property type="entry name" value="SF4_HELICASE"/>
    <property type="match status" value="1"/>
</dbReference>
<evidence type="ECO:0000255" key="1">
    <source>
        <dbReference type="PROSITE-ProRule" id="PRU00596"/>
    </source>
</evidence>
<evidence type="ECO:0000269" key="2">
    <source>
    </source>
</evidence>
<evidence type="ECO:0000269" key="3">
    <source>
    </source>
</evidence>
<evidence type="ECO:0000269" key="4">
    <source>
    </source>
</evidence>
<evidence type="ECO:0000269" key="5">
    <source>
    </source>
</evidence>
<evidence type="ECO:0000269" key="6">
    <source>
    </source>
</evidence>
<evidence type="ECO:0000269" key="7">
    <source>
    </source>
</evidence>
<evidence type="ECO:0000269" key="8">
    <source>
    </source>
</evidence>
<evidence type="ECO:0000269" key="9">
    <source>
    </source>
</evidence>
<evidence type="ECO:0000269" key="10">
    <source>
    </source>
</evidence>
<evidence type="ECO:0000303" key="11">
    <source>
    </source>
</evidence>
<evidence type="ECO:0000305" key="12"/>
<evidence type="ECO:0000305" key="13">
    <source>
    </source>
</evidence>
<evidence type="ECO:0000305" key="14">
    <source>
    </source>
</evidence>
<evidence type="ECO:0000305" key="15">
    <source>
    </source>
</evidence>
<evidence type="ECO:0000305" key="16">
    <source>
    </source>
</evidence>
<evidence type="ECO:0000305" key="17">
    <source>
    </source>
</evidence>
<evidence type="ECO:0000312" key="18">
    <source>
        <dbReference type="EMBL" id="AAD20314.1"/>
    </source>
</evidence>
<evidence type="ECO:0007744" key="19">
    <source>
        <dbReference type="PDB" id="2R6A"/>
    </source>
</evidence>
<evidence type="ECO:0007744" key="20">
    <source>
        <dbReference type="PDB" id="2R6C"/>
    </source>
</evidence>
<evidence type="ECO:0007744" key="21">
    <source>
        <dbReference type="PDB" id="2R6D"/>
    </source>
</evidence>
<evidence type="ECO:0007744" key="22">
    <source>
        <dbReference type="PDB" id="2R6E"/>
    </source>
</evidence>
<evidence type="ECO:0007744" key="23">
    <source>
        <dbReference type="PDB" id="4ESV"/>
    </source>
</evidence>
<evidence type="ECO:0007744" key="24">
    <source>
        <dbReference type="PDB" id="4M4W"/>
    </source>
</evidence>
<evidence type="ECO:0007829" key="25">
    <source>
        <dbReference type="PDB" id="2R6A"/>
    </source>
</evidence>
<evidence type="ECO:0007829" key="26">
    <source>
        <dbReference type="PDB" id="4ESV"/>
    </source>
</evidence>
<protein>
    <recommendedName>
        <fullName evidence="11">Replicative DNA helicase DnaB</fullName>
        <ecNumber evidence="14 15">5.6.2.3</ecNumber>
    </recommendedName>
    <alternativeName>
        <fullName evidence="12">DNA 5'-3' helicase DnaB</fullName>
    </alternativeName>
</protein>
<comment type="function">
    <text evidence="2 3 5 17">The main replicative DNA helicase, it participates in initiation and elongation during chromosome replication. Travels ahead of the DNA replisome, separating double-stranded (ds)DNA into templates for DNA synthesis. Binding of single-stranded (ss)DNA to the hexamer suggests a 2-nucleotide step size for the helicase and a hand-over-hand mechanism of DNA unwinding (Probable) (PubMed:23022319). Has ssDNA-stimulated ATPase activity (PubMed:10625492). DnaG primase stimulates the helicase activity (the helicase direction was not determine but is probably 5'-3') (PubMed:10625492, PubMed:12235389, PubMed:23022319). Loaded onto DNA by helicase loader DnaI (shown with DnaI of B.subtilis); ATP-binding enhances loading and subsequent ATP hydrolysis dissociates the complex, leaving helicase on the DNA (PubMed:17003052). Binds ssDNA and less well dsDNA, in the presence of ADPNP (probably 5'-adenylyl beta, gamma-imidodiphosphate, but not ATP) binding to both DNAs is improved (PubMed:12235389, PubMed:17003052).</text>
</comment>
<comment type="catalytic activity">
    <reaction evidence="13 14 15">
        <text>Couples ATP hydrolysis with the unwinding of duplex DNA at the replication fork by translocating in the 5'-3' direction. This creates two antiparallel DNA single strands (ssDNA). The leading ssDNA polymer is the template for DNA polymerase III holoenzyme which synthesizes a continuous strand.</text>
        <dbReference type="EC" id="5.6.2.3"/>
    </reaction>
</comment>
<comment type="catalytic activity">
    <reaction evidence="2 3">
        <text>ATP + H2O = ADP + phosphate + H(+)</text>
        <dbReference type="Rhea" id="RHEA:13065"/>
        <dbReference type="ChEBI" id="CHEBI:15377"/>
        <dbReference type="ChEBI" id="CHEBI:15378"/>
        <dbReference type="ChEBI" id="CHEBI:30616"/>
        <dbReference type="ChEBI" id="CHEBI:43474"/>
        <dbReference type="ChEBI" id="CHEBI:456216"/>
        <dbReference type="EC" id="5.6.2.3"/>
    </reaction>
</comment>
<comment type="subunit">
    <text evidence="2 4 5 6 7 8 9 10">Homohexamer (PubMed:10625492, PubMed:17003052, PubMed:17947583, PubMed:23525462, PubMed:23022319, PubMed:24048025). Interacts with DnaG primase, as DnaB(6):DnaG(3) (PubMed:10625492, PubMed:17947583, PubMed:24048025). Interacts with the N-terminus of DnaI (shown with DnaI of B.subtilis), forms a helicase DnaB(6):DnaI(6) complex (PubMed:17003052, PubMed:19255093, PubMed:24048025). The DnaB-DnaI complex is disrupted by DnaD (DnaD and DnaI from B.subtilis) (PubMed:15556628). A stable complex DnaI(6):DnaB(6):DnaG(3) fragment can be isolated; DnaI and DnaG do not contact each other (DnaI in this complex is derived from B.subtilis) (PubMed:24048025). Forms a complex with DNA clamp loader protein tau (shown with B.subtilis HolA) tau(3):DnaB(6); a single ATP hydrolysis even is sufficient for complex formation (PubMed:23525462).</text>
</comment>
<comment type="interaction">
    <interactant intactId="EBI-6402993">
        <id>Q9X4C9</id>
    </interactant>
    <interactant intactId="EBI-6402993">
        <id>Q9X4C9</id>
        <label>dnaB</label>
    </interactant>
    <organismsDiffer>false</organismsDiffer>
    <experiments>2</experiments>
</comment>
<comment type="interaction">
    <interactant intactId="EBI-6402993">
        <id>Q9X4C9</id>
    </interactant>
    <interactant intactId="EBI-6403005">
        <id>Q9X4D0</id>
        <label>dnaG</label>
    </interactant>
    <organismsDiffer>false</organismsDiffer>
    <experiments>7</experiments>
</comment>
<comment type="interaction">
    <interactant intactId="EBI-6402993">
        <id>Q9X4C9</id>
    </interactant>
    <interactant intactId="EBI-5243974">
        <id>P09122</id>
        <label>dnaX</label>
    </interactant>
    <organismsDiffer>true</organismsDiffer>
    <experiments>2</experiments>
</comment>
<comment type="domain">
    <text evidence="6 8">Within the hexamer the N-terminal domains (NTD) form a rigid ring, while the C-terminal domains (CTD) form a looser ring; the 2 rings stack to form a double-layered ring (PubMed:17947583). In a complex without DNA or bound nucleotides the central channel varies from 25-50 Angstroms in diameter (PubMed:17947583). The NTD interacts with the helicase-binding domain of DnaG primase (PubMed:17947583). In complex with ssDNA and an NTP analog forms a double-layered, right-handed spiral staircase with a small internal diameter; 5 of the 6 subunits bind NTP (PubMed:23022319). Closely contacts 11 nucleotides of ssDNA, the 5'-end points toward the NTD staircase (PubMed:23022319). Binding of ssDNA and NTP induces domain movements that allow the ATP-binding sites to form (PubMed:23022319).</text>
</comment>
<comment type="miscellaneous">
    <text evidence="15 17">The gamma-phosphate sensor residue (Gln-362) may sense nucleotide binding/hydrolysis in the active site; it is also important in DnaG-induced stimulation of DnaB activity (PubMed:12235389, PubMed:23022319). Other possible gamma-phosphate sensor residues are Lys-216; Lys-418 and Arg-420 (PubMed:23022319).</text>
</comment>
<comment type="similarity">
    <text evidence="12">Belongs to the helicase family. DnaB subfamily.</text>
</comment>
<name>DNAB_GEOSE</name>
<reference evidence="18" key="1">
    <citation type="journal article" date="1999" name="Biochim. Biophys. Acta">
        <title>The Bacillus stearothermophilus replicative helicase: cloning, overexpression and activity.</title>
        <authorList>
            <person name="Bird L.E."/>
            <person name="Wigley D.B."/>
        </authorList>
    </citation>
    <scope>NUCLEOTIDE SEQUENCE [GENOMIC DNA]</scope>
    <scope>FUNCTION AS A HELICASE</scope>
    <source>
        <strain>ATCC 29609 / DSM 2027 / NCA 1503 / NCIMB 8924</strain>
    </source>
</reference>
<reference key="2">
    <citation type="journal article" date="2000" name="Biochemistry">
        <title>Mapping protein-protein interactions within a stable complex of DNA primase and DnaB helicase from Bacillus stearothermophilus.</title>
        <authorList>
            <person name="Bird L.E."/>
            <person name="Pan H."/>
            <person name="Soultanas P."/>
            <person name="Wigley D.B."/>
        </authorList>
    </citation>
    <scope>PROTEIN SEQUENCE OF 1-4; 151-158 AND 451-454</scope>
    <scope>FUNCTION AS A HELICASE</scope>
    <scope>FUNCTION AS AN ATPASE</scope>
    <scope>SUBUNIT</scope>
    <source>
        <strain>ATCC 29609 / DSM 2027 / NCA 1503 / NCIMB 8924</strain>
    </source>
</reference>
<reference key="3">
    <citation type="journal article" date="2002" name="Nucleic Acids Res.">
        <title>Site-directed mutagenesis reveals roles for conserved amino acid residues in the hexameric DNA helicase DnaB from Bacillus stearothermophilus.</title>
        <authorList>
            <person name="Soultanas P."/>
            <person name="Wigley D.B."/>
        </authorList>
    </citation>
    <scope>FUNCTION AS A HELICASE</scope>
    <scope>FUNCTION AS AN ATPASE</scope>
    <scope>POSSIBLE ACTIVE SITE</scope>
    <scope>SSDNA-BINDING</scope>
    <scope>MUTAGENESIS OF LYS-216; THR-217; GLU-241; ASP-320 AND GLN-362</scope>
</reference>
<reference key="4">
    <citation type="journal article" date="2004" name="FEBS Lett.">
        <title>The Bacillus subtilis DnaD protein: a putative link between DNA remodeling and initiation of DNA replication.</title>
        <authorList>
            <person name="Turner I.J."/>
            <person name="Scott D.J."/>
            <person name="Allen S."/>
            <person name="Roberts C.J."/>
            <person name="Soultanas P."/>
        </authorList>
    </citation>
    <scope>SUBUNIT</scope>
</reference>
<reference key="5">
    <citation type="journal article" date="2006" name="Nucleic Acids Res.">
        <title>Helicase binding to DnaI exposes a cryptic DNA-binding site during helicase loading in Bacillus subtilis.</title>
        <authorList>
            <person name="Ioannou C."/>
            <person name="Schaeffer P.M."/>
            <person name="Dixon N.E."/>
            <person name="Soultanas P."/>
        </authorList>
    </citation>
    <scope>SUBUNIT</scope>
    <scope>DNA-BINDING</scope>
</reference>
<reference key="6">
    <citation type="journal article" date="2009" name="Nucleic Acids Res.">
        <title>A novel zinc-binding fold in the helicase interaction domain of the Bacillus subtilis DnaI helicase loader.</title>
        <authorList>
            <person name="Loscha K.V."/>
            <person name="Jaudzems K."/>
            <person name="Ioannou C."/>
            <person name="Su X.C."/>
            <person name="Hill F.R."/>
            <person name="Otting G."/>
            <person name="Dixon N.E."/>
            <person name="Liepinsh E."/>
        </authorList>
    </citation>
    <scope>SUBUNIT</scope>
</reference>
<reference evidence="19 20 21 22" key="7">
    <citation type="journal article" date="2007" name="Science">
        <title>Structure of hexameric DnaB helicase and its complex with a domain of DnaG primase.</title>
        <authorList>
            <person name="Bailey S."/>
            <person name="Eliason W.K."/>
            <person name="Steitz T.A."/>
        </authorList>
    </citation>
    <scope>X-RAY CRYSTALLOGRAPHY (3.70 ANGSTROMS) ALONE</scope>
    <scope>X-RAY CRYSTALLOGRAPHY (2.90 ANGSTROMS) IN COMPLEX WITH C-TERMINUS OF DNAG</scope>
    <scope>INTERACTION WITH DNAG</scope>
    <scope>DOMAIN</scope>
</reference>
<reference key="8">
    <citation type="journal article" date="2013" name="Nucleic Acids Res.">
        <title>Insights into the structure and assembly of the Bacillus subtilis clamp-loader complex and its interaction with the replicative helicase.</title>
        <authorList>
            <person name="Afonso J.P."/>
            <person name="Chintakayala K."/>
            <person name="Suwannachart C."/>
            <person name="Sedelnikova S."/>
            <person name="Giles K."/>
            <person name="Hoyes J.B."/>
            <person name="Soultanas P."/>
            <person name="Rafferty J.B."/>
            <person name="Oldham N.J."/>
        </authorList>
    </citation>
    <scope>SUBUNIT</scope>
    <scope>MUTAGENESIS OF THR-217</scope>
</reference>
<reference evidence="23" key="9">
    <citation type="journal article" date="2012" name="Cell">
        <title>The hexameric helicase DnaB adopts a nonplanar conformation during translocation.</title>
        <authorList>
            <person name="Itsathitphaisarn O."/>
            <person name="Wing R.A."/>
            <person name="Eliason W.K."/>
            <person name="Wang J."/>
            <person name="Steitz T.A."/>
        </authorList>
    </citation>
    <scope>X-RAY CRYSTALLOGRAPHY (3.20 ANGSTROMS) IN COMPLEX WITH NTP ANALOG AND SSDNA</scope>
    <scope>POSSIBLE REACTION MECHANISM</scope>
    <scope>PROBABLE ACTIVE SITE</scope>
    <scope>DOMAIN</scope>
    <scope>DNA-BINDING</scope>
</reference>
<reference evidence="24" key="10">
    <citation type="journal article" date="2013" name="Nat. Commun.">
        <title>Structure of a helicase-helicase loader complex reveals insights into the mechanism of bacterial primosome assembly.</title>
        <authorList>
            <person name="Liu B."/>
            <person name="Eliason W.K."/>
            <person name="Steitz T.A."/>
        </authorList>
    </citation>
    <scope>X-RAY CRYSTALLOGRAPHY (6.10 ANGSTROMS) IN COMPLEX WITH DNAG AND DNAI OF B.SUBTILIS</scope>
</reference>
<sequence length="454" mass="50643">MSELFSERIPPQSIEAEQAVLGAVFLDPAALVPASEILIPEDFYRAAHQKIFHAMLRVADRGEPVDLVTVTAELAASEQLEEIGGVSYLSELADAVPTAANVEYYARIVEEKSVLRRLIRTATSIAQDGYTREDEIDVLLDEADRKIMEVSQRKHSGAFKNIKDILVQTYDNIEMLHNRDGEITGIPTGFTELDRMTSGFQRSDLIIVAARPSVGKTAFALNIAQNVATKTNENVAIFSLEMSAQQLVMRMLCAEGNINAQNLRTGKLTPEDWGKLTMAMGSLSNAGIYIDDTPSIRVSDIRAKCRRLKQESGLGMIVIDYLQLIQGSGRSKENRQQEVSEISRSLKALARELEVPVIALSQLSRSVEQRQDKRPMMSDIRESGSIEQDADIVAFLYRDDYYNKDSENKNIIEIIIAKQRNGPVGTVQLAFIKEYNKFVNLERRFDEAQIPPGA</sequence>
<proteinExistence type="evidence at protein level"/>